<evidence type="ECO:0000255" key="1">
    <source>
        <dbReference type="HAMAP-Rule" id="MF_00671"/>
    </source>
</evidence>
<feature type="signal peptide" evidence="1">
    <location>
        <begin position="1"/>
        <end position="18"/>
    </location>
</feature>
<feature type="chain" id="PRO_1000026708" description="Tol-Pal system protein TolB" evidence="1">
    <location>
        <begin position="19"/>
        <end position="444"/>
    </location>
</feature>
<name>TOLB_RICB8</name>
<accession>A8GXK7</accession>
<proteinExistence type="inferred from homology"/>
<gene>
    <name evidence="1" type="primary">tolB</name>
    <name type="ordered locus">A1I_06455</name>
</gene>
<protein>
    <recommendedName>
        <fullName evidence="1">Tol-Pal system protein TolB</fullName>
    </recommendedName>
</protein>
<keyword id="KW-0131">Cell cycle</keyword>
<keyword id="KW-0132">Cell division</keyword>
<keyword id="KW-0574">Periplasm</keyword>
<keyword id="KW-0732">Signal</keyword>
<organism>
    <name type="scientific">Rickettsia bellii (strain OSU 85-389)</name>
    <dbReference type="NCBI Taxonomy" id="391896"/>
    <lineage>
        <taxon>Bacteria</taxon>
        <taxon>Pseudomonadati</taxon>
        <taxon>Pseudomonadota</taxon>
        <taxon>Alphaproteobacteria</taxon>
        <taxon>Rickettsiales</taxon>
        <taxon>Rickettsiaceae</taxon>
        <taxon>Rickettsieae</taxon>
        <taxon>Rickettsia</taxon>
        <taxon>belli group</taxon>
    </lineage>
</organism>
<comment type="function">
    <text evidence="1">Part of the Tol-Pal system, which plays a role in outer membrane invagination during cell division and is important for maintaining outer membrane integrity.</text>
</comment>
<comment type="subunit">
    <text evidence="1">The Tol-Pal system is composed of five core proteins: the inner membrane proteins TolA, TolQ and TolR, the periplasmic protein TolB and the outer membrane protein Pal. They form a network linking the inner and outer membranes and the peptidoglycan layer.</text>
</comment>
<comment type="subcellular location">
    <subcellularLocation>
        <location evidence="1">Periplasm</location>
    </subcellularLocation>
</comment>
<comment type="similarity">
    <text evidence="1">Belongs to the TolB family.</text>
</comment>
<reference key="1">
    <citation type="submission" date="2007-09" db="EMBL/GenBank/DDBJ databases">
        <title>Complete genome sequencing of Rickettsia bellii.</title>
        <authorList>
            <person name="Madan A."/>
            <person name="Lee H."/>
            <person name="Madan A."/>
            <person name="Yoon J.-G."/>
            <person name="Ryu G.-Y."/>
            <person name="Dasch G."/>
            <person name="Ereemeva M."/>
        </authorList>
    </citation>
    <scope>NUCLEOTIDE SEQUENCE [LARGE SCALE GENOMIC DNA]</scope>
    <source>
        <strain>OSU 85-389</strain>
    </source>
</reference>
<sequence>MKNIIYCILLLFSFNSYALETINIEHGKADPTPIAVNNFEADSASDNTVGHEIVKVISNDLKLCGLFHPISSASFIEEKTGIGYKPLFAAWRQINASLLVNGAVKKLENGKLKISFILWDTLLEKQLGGEVLELPENLWRRAAHKIADKIYEKITGDTGYFDSKIIYVAESGPDLKKVKRIALMDYDGANNRYITDGKSLVLTPRFSGSADKIFYVSYATKRRTLVYEKDLKTGKESIVGDFAGISFAPRFAPDGRKAVMSIAKNGSTHIYEIDLATKRLHKLTDGFGINTSPSYSPDGRRIVFNSDRNGVPQLYIMNSDGSNVQRISFGGGSYMAPSWSPRGDYIAFTKIIRGSEGKTFNIGVMKPYPQDDENSERVIASGYLVESPCWSPNGRVIMFAKGWPSNGKSSGKNRIYAIDLTGHNEREIKTPGDASDPEWSNLLN</sequence>
<dbReference type="EMBL" id="CP000849">
    <property type="protein sequence ID" value="ABV79607.1"/>
    <property type="molecule type" value="Genomic_DNA"/>
</dbReference>
<dbReference type="RefSeq" id="WP_011476961.1">
    <property type="nucleotide sequence ID" value="NC_009883.1"/>
</dbReference>
<dbReference type="SMR" id="A8GXK7"/>
<dbReference type="KEGG" id="rbo:A1I_06455"/>
<dbReference type="HOGENOM" id="CLU_047123_0_0_5"/>
<dbReference type="GO" id="GO:0042597">
    <property type="term" value="C:periplasmic space"/>
    <property type="evidence" value="ECO:0007669"/>
    <property type="project" value="UniProtKB-SubCell"/>
</dbReference>
<dbReference type="GO" id="GO:0051301">
    <property type="term" value="P:cell division"/>
    <property type="evidence" value="ECO:0007669"/>
    <property type="project" value="UniProtKB-UniRule"/>
</dbReference>
<dbReference type="GO" id="GO:0017038">
    <property type="term" value="P:protein import"/>
    <property type="evidence" value="ECO:0007669"/>
    <property type="project" value="InterPro"/>
</dbReference>
<dbReference type="Gene3D" id="2.120.10.30">
    <property type="entry name" value="TolB, C-terminal domain"/>
    <property type="match status" value="1"/>
</dbReference>
<dbReference type="Gene3D" id="3.40.50.10070">
    <property type="entry name" value="TolB, N-terminal domain"/>
    <property type="match status" value="1"/>
</dbReference>
<dbReference type="HAMAP" id="MF_00671">
    <property type="entry name" value="TolB"/>
    <property type="match status" value="1"/>
</dbReference>
<dbReference type="InterPro" id="IPR011042">
    <property type="entry name" value="6-blade_b-propeller_TolB-like"/>
</dbReference>
<dbReference type="InterPro" id="IPR011659">
    <property type="entry name" value="PD40"/>
</dbReference>
<dbReference type="InterPro" id="IPR014167">
    <property type="entry name" value="Tol-Pal_TolB"/>
</dbReference>
<dbReference type="InterPro" id="IPR007195">
    <property type="entry name" value="TolB_N"/>
</dbReference>
<dbReference type="NCBIfam" id="TIGR02800">
    <property type="entry name" value="propeller_TolB"/>
    <property type="match status" value="1"/>
</dbReference>
<dbReference type="PANTHER" id="PTHR36842:SF1">
    <property type="entry name" value="PROTEIN TOLB"/>
    <property type="match status" value="1"/>
</dbReference>
<dbReference type="PANTHER" id="PTHR36842">
    <property type="entry name" value="PROTEIN TOLB HOMOLOG"/>
    <property type="match status" value="1"/>
</dbReference>
<dbReference type="Pfam" id="PF07676">
    <property type="entry name" value="PD40"/>
    <property type="match status" value="4"/>
</dbReference>
<dbReference type="Pfam" id="PF04052">
    <property type="entry name" value="TolB_N"/>
    <property type="match status" value="1"/>
</dbReference>
<dbReference type="SUPFAM" id="SSF52964">
    <property type="entry name" value="TolB, N-terminal domain"/>
    <property type="match status" value="1"/>
</dbReference>
<dbReference type="SUPFAM" id="SSF69304">
    <property type="entry name" value="Tricorn protease N-terminal domain"/>
    <property type="match status" value="1"/>
</dbReference>